<evidence type="ECO:0000255" key="1">
    <source>
        <dbReference type="HAMAP-Rule" id="MF_00453"/>
    </source>
</evidence>
<name>PCKA_GEOMG</name>
<dbReference type="EC" id="4.1.1.49" evidence="1"/>
<dbReference type="EMBL" id="CP000148">
    <property type="protein sequence ID" value="ABB33382.1"/>
    <property type="molecule type" value="Genomic_DNA"/>
</dbReference>
<dbReference type="RefSeq" id="WP_004513885.1">
    <property type="nucleotide sequence ID" value="NC_007517.1"/>
</dbReference>
<dbReference type="SMR" id="Q39QU2"/>
<dbReference type="STRING" id="269799.Gmet_3169"/>
<dbReference type="KEGG" id="gme:Gmet_3169"/>
<dbReference type="eggNOG" id="COG1866">
    <property type="taxonomic scope" value="Bacteria"/>
</dbReference>
<dbReference type="HOGENOM" id="CLU_018247_0_1_7"/>
<dbReference type="UniPathway" id="UPA00138"/>
<dbReference type="Proteomes" id="UP000007073">
    <property type="component" value="Chromosome"/>
</dbReference>
<dbReference type="GO" id="GO:0005829">
    <property type="term" value="C:cytosol"/>
    <property type="evidence" value="ECO:0007669"/>
    <property type="project" value="TreeGrafter"/>
</dbReference>
<dbReference type="GO" id="GO:0005524">
    <property type="term" value="F:ATP binding"/>
    <property type="evidence" value="ECO:0007669"/>
    <property type="project" value="UniProtKB-UniRule"/>
</dbReference>
<dbReference type="GO" id="GO:0046872">
    <property type="term" value="F:metal ion binding"/>
    <property type="evidence" value="ECO:0007669"/>
    <property type="project" value="UniProtKB-KW"/>
</dbReference>
<dbReference type="GO" id="GO:0004612">
    <property type="term" value="F:phosphoenolpyruvate carboxykinase (ATP) activity"/>
    <property type="evidence" value="ECO:0007669"/>
    <property type="project" value="UniProtKB-UniRule"/>
</dbReference>
<dbReference type="GO" id="GO:0006094">
    <property type="term" value="P:gluconeogenesis"/>
    <property type="evidence" value="ECO:0007669"/>
    <property type="project" value="UniProtKB-UniRule"/>
</dbReference>
<dbReference type="CDD" id="cd00484">
    <property type="entry name" value="PEPCK_ATP"/>
    <property type="match status" value="1"/>
</dbReference>
<dbReference type="Gene3D" id="3.90.228.20">
    <property type="match status" value="1"/>
</dbReference>
<dbReference type="Gene3D" id="3.40.449.10">
    <property type="entry name" value="Phosphoenolpyruvate Carboxykinase, domain 1"/>
    <property type="match status" value="1"/>
</dbReference>
<dbReference type="Gene3D" id="2.170.8.10">
    <property type="entry name" value="Phosphoenolpyruvate Carboxykinase, domain 2"/>
    <property type="match status" value="1"/>
</dbReference>
<dbReference type="HAMAP" id="MF_00453">
    <property type="entry name" value="PEPCK_ATP"/>
    <property type="match status" value="1"/>
</dbReference>
<dbReference type="InterPro" id="IPR001272">
    <property type="entry name" value="PEP_carboxykinase_ATP"/>
</dbReference>
<dbReference type="InterPro" id="IPR013035">
    <property type="entry name" value="PEP_carboxykinase_C"/>
</dbReference>
<dbReference type="InterPro" id="IPR008210">
    <property type="entry name" value="PEP_carboxykinase_N"/>
</dbReference>
<dbReference type="InterPro" id="IPR015994">
    <property type="entry name" value="PEPCK_ATP_CS"/>
</dbReference>
<dbReference type="NCBIfam" id="TIGR00224">
    <property type="entry name" value="pckA"/>
    <property type="match status" value="1"/>
</dbReference>
<dbReference type="NCBIfam" id="NF006820">
    <property type="entry name" value="PRK09344.1-2"/>
    <property type="match status" value="1"/>
</dbReference>
<dbReference type="NCBIfam" id="NF006821">
    <property type="entry name" value="PRK09344.1-3"/>
    <property type="match status" value="1"/>
</dbReference>
<dbReference type="PANTHER" id="PTHR30031:SF0">
    <property type="entry name" value="PHOSPHOENOLPYRUVATE CARBOXYKINASE (ATP)"/>
    <property type="match status" value="1"/>
</dbReference>
<dbReference type="PANTHER" id="PTHR30031">
    <property type="entry name" value="PHOSPHOENOLPYRUVATE CARBOXYKINASE ATP"/>
    <property type="match status" value="1"/>
</dbReference>
<dbReference type="Pfam" id="PF01293">
    <property type="entry name" value="PEPCK_ATP"/>
    <property type="match status" value="1"/>
</dbReference>
<dbReference type="PIRSF" id="PIRSF006294">
    <property type="entry name" value="PEP_crbxkin"/>
    <property type="match status" value="1"/>
</dbReference>
<dbReference type="SUPFAM" id="SSF68923">
    <property type="entry name" value="PEP carboxykinase N-terminal domain"/>
    <property type="match status" value="1"/>
</dbReference>
<dbReference type="SUPFAM" id="SSF53795">
    <property type="entry name" value="PEP carboxykinase-like"/>
    <property type="match status" value="1"/>
</dbReference>
<dbReference type="PROSITE" id="PS00532">
    <property type="entry name" value="PEPCK_ATP"/>
    <property type="match status" value="1"/>
</dbReference>
<organism>
    <name type="scientific">Geobacter metallireducens (strain ATCC 53774 / DSM 7210 / GS-15)</name>
    <dbReference type="NCBI Taxonomy" id="269799"/>
    <lineage>
        <taxon>Bacteria</taxon>
        <taxon>Pseudomonadati</taxon>
        <taxon>Thermodesulfobacteriota</taxon>
        <taxon>Desulfuromonadia</taxon>
        <taxon>Geobacterales</taxon>
        <taxon>Geobacteraceae</taxon>
        <taxon>Geobacter</taxon>
    </lineage>
</organism>
<protein>
    <recommendedName>
        <fullName evidence="1">Phosphoenolpyruvate carboxykinase (ATP)</fullName>
        <shortName evidence="1">PCK</shortName>
        <shortName evidence="1">PEP carboxykinase</shortName>
        <shortName evidence="1">PEPCK</shortName>
        <ecNumber evidence="1">4.1.1.49</ecNumber>
    </recommendedName>
</protein>
<comment type="function">
    <text evidence="1">Involved in the gluconeogenesis. Catalyzes the conversion of oxaloacetate (OAA) to phosphoenolpyruvate (PEP) through direct phosphoryl transfer between the nucleoside triphosphate and OAA.</text>
</comment>
<comment type="catalytic activity">
    <reaction evidence="1">
        <text>oxaloacetate + ATP = phosphoenolpyruvate + ADP + CO2</text>
        <dbReference type="Rhea" id="RHEA:18617"/>
        <dbReference type="ChEBI" id="CHEBI:16452"/>
        <dbReference type="ChEBI" id="CHEBI:16526"/>
        <dbReference type="ChEBI" id="CHEBI:30616"/>
        <dbReference type="ChEBI" id="CHEBI:58702"/>
        <dbReference type="ChEBI" id="CHEBI:456216"/>
        <dbReference type="EC" id="4.1.1.49"/>
    </reaction>
</comment>
<comment type="cofactor">
    <cofactor evidence="1">
        <name>Mn(2+)</name>
        <dbReference type="ChEBI" id="CHEBI:29035"/>
    </cofactor>
    <text evidence="1">Binds 1 Mn(2+) ion per subunit.</text>
</comment>
<comment type="pathway">
    <text evidence="1">Carbohydrate biosynthesis; gluconeogenesis.</text>
</comment>
<comment type="subcellular location">
    <subcellularLocation>
        <location evidence="1">Cytoplasm</location>
    </subcellularLocation>
</comment>
<comment type="similarity">
    <text evidence="1">Belongs to the phosphoenolpyruvate carboxykinase (ATP) family.</text>
</comment>
<proteinExistence type="inferred from homology"/>
<gene>
    <name evidence="1" type="primary">pckA</name>
    <name type="ordered locus">Gmet_3169</name>
</gene>
<reference key="1">
    <citation type="journal article" date="2009" name="BMC Microbiol.">
        <title>The genome sequence of Geobacter metallireducens: features of metabolism, physiology and regulation common and dissimilar to Geobacter sulfurreducens.</title>
        <authorList>
            <person name="Aklujkar M."/>
            <person name="Krushkal J."/>
            <person name="DiBartolo G."/>
            <person name="Lapidus A."/>
            <person name="Land M.L."/>
            <person name="Lovley D.R."/>
        </authorList>
    </citation>
    <scope>NUCLEOTIDE SEQUENCE [LARGE SCALE GENOMIC DNA]</scope>
    <source>
        <strain>ATCC 53774 / DSM 7210 / GS-15</strain>
    </source>
</reference>
<accession>Q39QU2</accession>
<keyword id="KW-0067">ATP-binding</keyword>
<keyword id="KW-0963">Cytoplasm</keyword>
<keyword id="KW-0210">Decarboxylase</keyword>
<keyword id="KW-0312">Gluconeogenesis</keyword>
<keyword id="KW-0456">Lyase</keyword>
<keyword id="KW-0464">Manganese</keyword>
<keyword id="KW-0479">Metal-binding</keyword>
<keyword id="KW-0547">Nucleotide-binding</keyword>
<keyword id="KW-1185">Reference proteome</keyword>
<feature type="chain" id="PRO_0000236924" description="Phosphoenolpyruvate carboxykinase (ATP)">
    <location>
        <begin position="1"/>
        <end position="530"/>
    </location>
</feature>
<feature type="binding site" evidence="1">
    <location>
        <position position="60"/>
    </location>
    <ligand>
        <name>substrate</name>
    </ligand>
</feature>
<feature type="binding site" evidence="1">
    <location>
        <position position="195"/>
    </location>
    <ligand>
        <name>substrate</name>
    </ligand>
</feature>
<feature type="binding site" evidence="1">
    <location>
        <position position="201"/>
    </location>
    <ligand>
        <name>ATP</name>
        <dbReference type="ChEBI" id="CHEBI:30616"/>
    </ligand>
</feature>
<feature type="binding site" evidence="1">
    <location>
        <position position="201"/>
    </location>
    <ligand>
        <name>Mn(2+)</name>
        <dbReference type="ChEBI" id="CHEBI:29035"/>
    </ligand>
</feature>
<feature type="binding site" evidence="1">
    <location>
        <position position="201"/>
    </location>
    <ligand>
        <name>substrate</name>
    </ligand>
</feature>
<feature type="binding site" evidence="1">
    <location>
        <position position="221"/>
    </location>
    <ligand>
        <name>ATP</name>
        <dbReference type="ChEBI" id="CHEBI:30616"/>
    </ligand>
</feature>
<feature type="binding site" evidence="1">
    <location>
        <position position="221"/>
    </location>
    <ligand>
        <name>Mn(2+)</name>
        <dbReference type="ChEBI" id="CHEBI:29035"/>
    </ligand>
</feature>
<feature type="binding site" evidence="1">
    <location>
        <begin position="237"/>
        <end position="245"/>
    </location>
    <ligand>
        <name>ATP</name>
        <dbReference type="ChEBI" id="CHEBI:30616"/>
    </ligand>
</feature>
<feature type="binding site" evidence="1">
    <location>
        <position position="258"/>
    </location>
    <ligand>
        <name>Mn(2+)</name>
        <dbReference type="ChEBI" id="CHEBI:29035"/>
    </ligand>
</feature>
<feature type="binding site" evidence="1">
    <location>
        <position position="286"/>
    </location>
    <ligand>
        <name>ATP</name>
        <dbReference type="ChEBI" id="CHEBI:30616"/>
    </ligand>
</feature>
<feature type="binding site" evidence="1">
    <location>
        <position position="324"/>
    </location>
    <ligand>
        <name>ATP</name>
        <dbReference type="ChEBI" id="CHEBI:30616"/>
    </ligand>
</feature>
<feature type="binding site" evidence="1">
    <location>
        <position position="324"/>
    </location>
    <ligand>
        <name>substrate</name>
    </ligand>
</feature>
<feature type="binding site" evidence="1">
    <location>
        <position position="449"/>
    </location>
    <ligand>
        <name>ATP</name>
        <dbReference type="ChEBI" id="CHEBI:30616"/>
    </ligand>
</feature>
<sequence length="530" mass="58150">MRLNDITRGTGLEEHGITNANLIYWTPPTAVLYEQIVKRGEGLVTHLGAVAVKTGHYTGRAANEKFIVDEPSSNDHIAWGKVNQPFDSAKFDALFGRMLAYLHGKDIFVQECFAGCSPDHRLPVRVITERAWHSLFARNMFVRATPEELVGFKPGFTVIDLPAFHAIPSVDGTNTETFIIVNFEKRLIIIGGTSYAGEIKKSIFTILNYLLPQHKNVLSMHCSANVGEKDDVAVFFGLSGTGKTTLSADPRRRLIGDDEHGWDNSGVFNFEGGCYAKIINLSPEAEPEIYQTTRRFGTILENVAIDTVSRRIDLNDDSFTENTRASYPITHIPNIVKSGMGGHPTNIIMLTCDAFGVLPPIARLTPDQAMYHFLSGYTAKVAGTEAGITEPQAAFSACFGAPFMALHPSVYAKLLGEKIARHGVSCWLVNTGWSGGPYGVGSRMKIAYSRALVNAAIDGTLNAGSFVKDQFFGLDIPTGCSGVPAEVLNPKNTWVDKTKYDETATMLVERFRKNFEQYRSYVSAGVAEVM</sequence>